<accession>Q9ZLL2</accession>
<keyword id="KW-0067">ATP-binding</keyword>
<keyword id="KW-0131">Cell cycle</keyword>
<keyword id="KW-0132">Cell division</keyword>
<keyword id="KW-0133">Cell shape</keyword>
<keyword id="KW-0961">Cell wall biogenesis/degradation</keyword>
<keyword id="KW-0963">Cytoplasm</keyword>
<keyword id="KW-0436">Ligase</keyword>
<keyword id="KW-0547">Nucleotide-binding</keyword>
<keyword id="KW-0573">Peptidoglycan synthesis</keyword>
<comment type="function">
    <text evidence="1">Cell wall formation.</text>
</comment>
<comment type="catalytic activity">
    <reaction evidence="1">
        <text>UDP-N-acetyl-alpha-D-muramate + L-alanine + ATP = UDP-N-acetyl-alpha-D-muramoyl-L-alanine + ADP + phosphate + H(+)</text>
        <dbReference type="Rhea" id="RHEA:23372"/>
        <dbReference type="ChEBI" id="CHEBI:15378"/>
        <dbReference type="ChEBI" id="CHEBI:30616"/>
        <dbReference type="ChEBI" id="CHEBI:43474"/>
        <dbReference type="ChEBI" id="CHEBI:57972"/>
        <dbReference type="ChEBI" id="CHEBI:70757"/>
        <dbReference type="ChEBI" id="CHEBI:83898"/>
        <dbReference type="ChEBI" id="CHEBI:456216"/>
        <dbReference type="EC" id="6.3.2.8"/>
    </reaction>
</comment>
<comment type="pathway">
    <text evidence="1">Cell wall biogenesis; peptidoglycan biosynthesis.</text>
</comment>
<comment type="subcellular location">
    <subcellularLocation>
        <location evidence="1">Cytoplasm</location>
    </subcellularLocation>
</comment>
<comment type="similarity">
    <text evidence="1">Belongs to the MurCDEF family.</text>
</comment>
<organism>
    <name type="scientific">Helicobacter pylori (strain J99 / ATCC 700824)</name>
    <name type="common">Campylobacter pylori J99</name>
    <dbReference type="NCBI Taxonomy" id="85963"/>
    <lineage>
        <taxon>Bacteria</taxon>
        <taxon>Pseudomonadati</taxon>
        <taxon>Campylobacterota</taxon>
        <taxon>Epsilonproteobacteria</taxon>
        <taxon>Campylobacterales</taxon>
        <taxon>Helicobacteraceae</taxon>
        <taxon>Helicobacter</taxon>
    </lineage>
</organism>
<proteinExistence type="inferred from homology"/>
<sequence>MLETPKVLLKNLQDCKIHFIGIGGIGISGLAKYLKAQGAKISGSDIAISPSVKYLKALGVEINIPHDPKAINHQDVIIHSAIIKEDNTEIQRAKELEIPILSRKDALYSILKDKRVFSVCGAHGKSSITAMLSAICPAFGAIIGAHSKEFDSNVRESADMSLVFEADESDSSFLFSNPFCAIVPNTEPEHLEHYDHDLERFFFAYKYFLDHAQKRVIYKEDPFLKNYSKDAIVLEKKDIYNIQYILKDGEPYTSFELKNLGAFLVWGLGEHNATNASLAILSALDELNLEEIRNNLLNFKGIKKRFDILQKNNLILIDDYAHHPTEIGATLKSARIYANLLNTQEKIIVIWQAHKYSRLMDNLEEFKKCFLEHCDRLIILPVYSASEVKRDIDLKAHFKHYNPTFIDRVRKKGDFLELLVNDNVVETIEKGFVIGFGAGDITYQLRGEM</sequence>
<name>MURC_HELPJ</name>
<evidence type="ECO:0000255" key="1">
    <source>
        <dbReference type="HAMAP-Rule" id="MF_00046"/>
    </source>
</evidence>
<gene>
    <name evidence="1" type="primary">murC</name>
    <name type="ordered locus">jhp_0567</name>
</gene>
<reference key="1">
    <citation type="journal article" date="1999" name="Nature">
        <title>Genomic sequence comparison of two unrelated isolates of the human gastric pathogen Helicobacter pylori.</title>
        <authorList>
            <person name="Alm R.A."/>
            <person name="Ling L.-S.L."/>
            <person name="Moir D.T."/>
            <person name="King B.L."/>
            <person name="Brown E.D."/>
            <person name="Doig P.C."/>
            <person name="Smith D.R."/>
            <person name="Noonan B."/>
            <person name="Guild B.C."/>
            <person name="deJonge B.L."/>
            <person name="Carmel G."/>
            <person name="Tummino P.J."/>
            <person name="Caruso A."/>
            <person name="Uria-Nickelsen M."/>
            <person name="Mills D.M."/>
            <person name="Ives C."/>
            <person name="Gibson R."/>
            <person name="Merberg D."/>
            <person name="Mills S.D."/>
            <person name="Jiang Q."/>
            <person name="Taylor D.E."/>
            <person name="Vovis G.F."/>
            <person name="Trust T.J."/>
        </authorList>
    </citation>
    <scope>NUCLEOTIDE SEQUENCE [LARGE SCALE GENOMIC DNA]</scope>
    <source>
        <strain>J99 / ATCC 700824</strain>
    </source>
</reference>
<protein>
    <recommendedName>
        <fullName evidence="1">UDP-N-acetylmuramate--L-alanine ligase</fullName>
        <ecNumber evidence="1">6.3.2.8</ecNumber>
    </recommendedName>
    <alternativeName>
        <fullName evidence="1">UDP-N-acetylmuramoyl-L-alanine synthetase</fullName>
    </alternativeName>
</protein>
<dbReference type="EC" id="6.3.2.8" evidence="1"/>
<dbReference type="EMBL" id="AE001439">
    <property type="protein sequence ID" value="AAD06138.1"/>
    <property type="molecule type" value="Genomic_DNA"/>
</dbReference>
<dbReference type="PIR" id="B71917">
    <property type="entry name" value="B71917"/>
</dbReference>
<dbReference type="RefSeq" id="WP_000894702.1">
    <property type="nucleotide sequence ID" value="NC_000921.1"/>
</dbReference>
<dbReference type="SMR" id="Q9ZLL2"/>
<dbReference type="KEGG" id="hpj:jhp_0567"/>
<dbReference type="eggNOG" id="COG0773">
    <property type="taxonomic scope" value="Bacteria"/>
</dbReference>
<dbReference type="UniPathway" id="UPA00219"/>
<dbReference type="Proteomes" id="UP000000804">
    <property type="component" value="Chromosome"/>
</dbReference>
<dbReference type="GO" id="GO:0005737">
    <property type="term" value="C:cytoplasm"/>
    <property type="evidence" value="ECO:0007669"/>
    <property type="project" value="UniProtKB-SubCell"/>
</dbReference>
<dbReference type="GO" id="GO:0005524">
    <property type="term" value="F:ATP binding"/>
    <property type="evidence" value="ECO:0007669"/>
    <property type="project" value="UniProtKB-UniRule"/>
</dbReference>
<dbReference type="GO" id="GO:0008763">
    <property type="term" value="F:UDP-N-acetylmuramate-L-alanine ligase activity"/>
    <property type="evidence" value="ECO:0007669"/>
    <property type="project" value="UniProtKB-UniRule"/>
</dbReference>
<dbReference type="GO" id="GO:0051301">
    <property type="term" value="P:cell division"/>
    <property type="evidence" value="ECO:0007669"/>
    <property type="project" value="UniProtKB-KW"/>
</dbReference>
<dbReference type="GO" id="GO:0071555">
    <property type="term" value="P:cell wall organization"/>
    <property type="evidence" value="ECO:0007669"/>
    <property type="project" value="UniProtKB-KW"/>
</dbReference>
<dbReference type="GO" id="GO:0009252">
    <property type="term" value="P:peptidoglycan biosynthetic process"/>
    <property type="evidence" value="ECO:0007669"/>
    <property type="project" value="UniProtKB-UniRule"/>
</dbReference>
<dbReference type="GO" id="GO:0008360">
    <property type="term" value="P:regulation of cell shape"/>
    <property type="evidence" value="ECO:0007669"/>
    <property type="project" value="UniProtKB-KW"/>
</dbReference>
<dbReference type="Gene3D" id="3.90.190.20">
    <property type="entry name" value="Mur ligase, C-terminal domain"/>
    <property type="match status" value="1"/>
</dbReference>
<dbReference type="Gene3D" id="3.40.1190.10">
    <property type="entry name" value="Mur-like, catalytic domain"/>
    <property type="match status" value="1"/>
</dbReference>
<dbReference type="Gene3D" id="3.40.50.720">
    <property type="entry name" value="NAD(P)-binding Rossmann-like Domain"/>
    <property type="match status" value="1"/>
</dbReference>
<dbReference type="HAMAP" id="MF_00046">
    <property type="entry name" value="MurC"/>
    <property type="match status" value="1"/>
</dbReference>
<dbReference type="InterPro" id="IPR036565">
    <property type="entry name" value="Mur-like_cat_sf"/>
</dbReference>
<dbReference type="InterPro" id="IPR004101">
    <property type="entry name" value="Mur_ligase_C"/>
</dbReference>
<dbReference type="InterPro" id="IPR036615">
    <property type="entry name" value="Mur_ligase_C_dom_sf"/>
</dbReference>
<dbReference type="InterPro" id="IPR013221">
    <property type="entry name" value="Mur_ligase_cen"/>
</dbReference>
<dbReference type="InterPro" id="IPR000713">
    <property type="entry name" value="Mur_ligase_N"/>
</dbReference>
<dbReference type="InterPro" id="IPR050061">
    <property type="entry name" value="MurCDEF_pg_biosynth"/>
</dbReference>
<dbReference type="InterPro" id="IPR005758">
    <property type="entry name" value="UDP-N-AcMur_Ala_ligase_MurC"/>
</dbReference>
<dbReference type="NCBIfam" id="TIGR01082">
    <property type="entry name" value="murC"/>
    <property type="match status" value="1"/>
</dbReference>
<dbReference type="PANTHER" id="PTHR43445:SF3">
    <property type="entry name" value="UDP-N-ACETYLMURAMATE--L-ALANINE LIGASE"/>
    <property type="match status" value="1"/>
</dbReference>
<dbReference type="PANTHER" id="PTHR43445">
    <property type="entry name" value="UDP-N-ACETYLMURAMATE--L-ALANINE LIGASE-RELATED"/>
    <property type="match status" value="1"/>
</dbReference>
<dbReference type="Pfam" id="PF01225">
    <property type="entry name" value="Mur_ligase"/>
    <property type="match status" value="1"/>
</dbReference>
<dbReference type="Pfam" id="PF02875">
    <property type="entry name" value="Mur_ligase_C"/>
    <property type="match status" value="1"/>
</dbReference>
<dbReference type="Pfam" id="PF08245">
    <property type="entry name" value="Mur_ligase_M"/>
    <property type="match status" value="1"/>
</dbReference>
<dbReference type="SUPFAM" id="SSF51984">
    <property type="entry name" value="MurCD N-terminal domain"/>
    <property type="match status" value="1"/>
</dbReference>
<dbReference type="SUPFAM" id="SSF53623">
    <property type="entry name" value="MurD-like peptide ligases, catalytic domain"/>
    <property type="match status" value="1"/>
</dbReference>
<dbReference type="SUPFAM" id="SSF53244">
    <property type="entry name" value="MurD-like peptide ligases, peptide-binding domain"/>
    <property type="match status" value="1"/>
</dbReference>
<feature type="chain" id="PRO_0000182103" description="UDP-N-acetylmuramate--L-alanine ligase">
    <location>
        <begin position="1"/>
        <end position="449"/>
    </location>
</feature>
<feature type="binding site" evidence="1">
    <location>
        <begin position="121"/>
        <end position="127"/>
    </location>
    <ligand>
        <name>ATP</name>
        <dbReference type="ChEBI" id="CHEBI:30616"/>
    </ligand>
</feature>